<protein>
    <recommendedName>
        <fullName evidence="1">Phosphoribosylformylglycinamidine cyclo-ligase</fullName>
        <ecNumber evidence="1">6.3.3.1</ecNumber>
    </recommendedName>
    <alternativeName>
        <fullName evidence="1">AIR synthase</fullName>
    </alternativeName>
    <alternativeName>
        <fullName evidence="1">AIRS</fullName>
    </alternativeName>
    <alternativeName>
        <fullName evidence="1">Phosphoribosyl-aminoimidazole synthetase</fullName>
    </alternativeName>
</protein>
<sequence>MVTYKDAGVDIYKEDKVIRALASQIKFERTDAIKPADLKGHYAGAIEFGDYYLVLCTDGVGSKMVVAEMANKFDTVPIDMIAMNVNDAICIGAEPVALVDYMAVEDITEDIASQIGKGLNDGIKESNINLIGGETASLPNMIKGVDLAGTVLAVVKKDEIVSGKEVKSGDLIVGLRSSGIHSNGLSLARKVFFDIANLDVNSKLSHGKTVAEELLTPTKIYVKPVLEMIKQVNVKGLAHITGGGFRKLKRLNKEVCYKIDELPEILPIFKEMQKLGNVADEEMFKTFNMGIGFCVIVEKEDAEKIIEISNHHNIPAFVIGKIEDSVEVNGETKKETVLVEYNNKKMIME</sequence>
<comment type="catalytic activity">
    <reaction evidence="1">
        <text>2-formamido-N(1)-(5-O-phospho-beta-D-ribosyl)acetamidine + ATP = 5-amino-1-(5-phospho-beta-D-ribosyl)imidazole + ADP + phosphate + H(+)</text>
        <dbReference type="Rhea" id="RHEA:23032"/>
        <dbReference type="ChEBI" id="CHEBI:15378"/>
        <dbReference type="ChEBI" id="CHEBI:30616"/>
        <dbReference type="ChEBI" id="CHEBI:43474"/>
        <dbReference type="ChEBI" id="CHEBI:137981"/>
        <dbReference type="ChEBI" id="CHEBI:147287"/>
        <dbReference type="ChEBI" id="CHEBI:456216"/>
        <dbReference type="EC" id="6.3.3.1"/>
    </reaction>
</comment>
<comment type="pathway">
    <text evidence="1">Purine metabolism; IMP biosynthesis via de novo pathway; 5-amino-1-(5-phospho-D-ribosyl)imidazole from N(2)-formyl-N(1)-(5-phospho-D-ribosyl)glycinamide: step 2/2.</text>
</comment>
<comment type="subcellular location">
    <subcellularLocation>
        <location evidence="1">Cytoplasm</location>
    </subcellularLocation>
</comment>
<comment type="similarity">
    <text evidence="1">Belongs to the AIR synthase family.</text>
</comment>
<organism>
    <name type="scientific">Methanococcus maripaludis (strain DSM 14266 / JCM 13030 / NBRC 101832 / S2 / LL)</name>
    <dbReference type="NCBI Taxonomy" id="267377"/>
    <lineage>
        <taxon>Archaea</taxon>
        <taxon>Methanobacteriati</taxon>
        <taxon>Methanobacteriota</taxon>
        <taxon>Methanomada group</taxon>
        <taxon>Methanococci</taxon>
        <taxon>Methanococcales</taxon>
        <taxon>Methanococcaceae</taxon>
        <taxon>Methanococcus</taxon>
    </lineage>
</organism>
<reference key="1">
    <citation type="journal article" date="2004" name="J. Bacteriol.">
        <title>Complete genome sequence of the genetically tractable hydrogenotrophic methanogen Methanococcus maripaludis.</title>
        <authorList>
            <person name="Hendrickson E.L."/>
            <person name="Kaul R."/>
            <person name="Zhou Y."/>
            <person name="Bovee D."/>
            <person name="Chapman P."/>
            <person name="Chung J."/>
            <person name="Conway de Macario E."/>
            <person name="Dodsworth J.A."/>
            <person name="Gillett W."/>
            <person name="Graham D.E."/>
            <person name="Hackett M."/>
            <person name="Haydock A.K."/>
            <person name="Kang A."/>
            <person name="Land M.L."/>
            <person name="Levy R."/>
            <person name="Lie T.J."/>
            <person name="Major T.A."/>
            <person name="Moore B.C."/>
            <person name="Porat I."/>
            <person name="Palmeiri A."/>
            <person name="Rouse G."/>
            <person name="Saenphimmachak C."/>
            <person name="Soell D."/>
            <person name="Van Dien S."/>
            <person name="Wang T."/>
            <person name="Whitman W.B."/>
            <person name="Xia Q."/>
            <person name="Zhang Y."/>
            <person name="Larimer F.W."/>
            <person name="Olson M.V."/>
            <person name="Leigh J.A."/>
        </authorList>
    </citation>
    <scope>NUCLEOTIDE SEQUENCE [LARGE SCALE GENOMIC DNA]</scope>
    <source>
        <strain>DSM 14266 / JCM 13030 / NBRC 101832 / S2 / LL</strain>
    </source>
</reference>
<feature type="chain" id="PRO_0000258437" description="Phosphoribosylformylglycinamidine cyclo-ligase">
    <location>
        <begin position="1"/>
        <end position="349"/>
    </location>
</feature>
<dbReference type="EC" id="6.3.3.1" evidence="1"/>
<dbReference type="EMBL" id="BX950229">
    <property type="protein sequence ID" value="CAF30810.1"/>
    <property type="molecule type" value="Genomic_DNA"/>
</dbReference>
<dbReference type="RefSeq" id="WP_011171198.1">
    <property type="nucleotide sequence ID" value="NC_005791.1"/>
</dbReference>
<dbReference type="SMR" id="Q6LXU3"/>
<dbReference type="STRING" id="267377.MMP1254"/>
<dbReference type="EnsemblBacteria" id="CAF30810">
    <property type="protein sequence ID" value="CAF30810"/>
    <property type="gene ID" value="MMP1254"/>
</dbReference>
<dbReference type="GeneID" id="2762764"/>
<dbReference type="KEGG" id="mmp:MMP1254"/>
<dbReference type="PATRIC" id="fig|267377.15.peg.1287"/>
<dbReference type="eggNOG" id="arCOG00639">
    <property type="taxonomic scope" value="Archaea"/>
</dbReference>
<dbReference type="HOGENOM" id="CLU_047116_0_0_2"/>
<dbReference type="OrthoDB" id="6605at2157"/>
<dbReference type="UniPathway" id="UPA00074">
    <property type="reaction ID" value="UER00129"/>
</dbReference>
<dbReference type="Proteomes" id="UP000000590">
    <property type="component" value="Chromosome"/>
</dbReference>
<dbReference type="GO" id="GO:0005829">
    <property type="term" value="C:cytosol"/>
    <property type="evidence" value="ECO:0007669"/>
    <property type="project" value="TreeGrafter"/>
</dbReference>
<dbReference type="GO" id="GO:0005524">
    <property type="term" value="F:ATP binding"/>
    <property type="evidence" value="ECO:0007669"/>
    <property type="project" value="UniProtKB-KW"/>
</dbReference>
<dbReference type="GO" id="GO:0004637">
    <property type="term" value="F:phosphoribosylamine-glycine ligase activity"/>
    <property type="evidence" value="ECO:0007669"/>
    <property type="project" value="TreeGrafter"/>
</dbReference>
<dbReference type="GO" id="GO:0004641">
    <property type="term" value="F:phosphoribosylformylglycinamidine cyclo-ligase activity"/>
    <property type="evidence" value="ECO:0007669"/>
    <property type="project" value="UniProtKB-UniRule"/>
</dbReference>
<dbReference type="GO" id="GO:0006189">
    <property type="term" value="P:'de novo' IMP biosynthetic process"/>
    <property type="evidence" value="ECO:0007669"/>
    <property type="project" value="UniProtKB-UniRule"/>
</dbReference>
<dbReference type="GO" id="GO:0046084">
    <property type="term" value="P:adenine biosynthetic process"/>
    <property type="evidence" value="ECO:0007669"/>
    <property type="project" value="TreeGrafter"/>
</dbReference>
<dbReference type="CDD" id="cd02196">
    <property type="entry name" value="PurM"/>
    <property type="match status" value="1"/>
</dbReference>
<dbReference type="FunFam" id="3.30.1330.10:FF:000020">
    <property type="entry name" value="Phosphoribosylformylglycinamidine cyclo-ligase"/>
    <property type="match status" value="1"/>
</dbReference>
<dbReference type="FunFam" id="3.90.650.10:FF:000011">
    <property type="entry name" value="Phosphoribosylformylglycinamidine cyclo-ligase"/>
    <property type="match status" value="1"/>
</dbReference>
<dbReference type="Gene3D" id="3.90.650.10">
    <property type="entry name" value="PurM-like C-terminal domain"/>
    <property type="match status" value="1"/>
</dbReference>
<dbReference type="Gene3D" id="3.30.1330.10">
    <property type="entry name" value="PurM-like, N-terminal domain"/>
    <property type="match status" value="1"/>
</dbReference>
<dbReference type="HAMAP" id="MF_00741">
    <property type="entry name" value="AIRS"/>
    <property type="match status" value="1"/>
</dbReference>
<dbReference type="InterPro" id="IPR010918">
    <property type="entry name" value="PurM-like_C_dom"/>
</dbReference>
<dbReference type="InterPro" id="IPR036676">
    <property type="entry name" value="PurM-like_C_sf"/>
</dbReference>
<dbReference type="InterPro" id="IPR016188">
    <property type="entry name" value="PurM-like_N"/>
</dbReference>
<dbReference type="InterPro" id="IPR036921">
    <property type="entry name" value="PurM-like_N_sf"/>
</dbReference>
<dbReference type="InterPro" id="IPR004733">
    <property type="entry name" value="PurM_cligase"/>
</dbReference>
<dbReference type="NCBIfam" id="TIGR00878">
    <property type="entry name" value="purM"/>
    <property type="match status" value="1"/>
</dbReference>
<dbReference type="PANTHER" id="PTHR10520:SF12">
    <property type="entry name" value="TRIFUNCTIONAL PURINE BIOSYNTHETIC PROTEIN ADENOSINE-3"/>
    <property type="match status" value="1"/>
</dbReference>
<dbReference type="PANTHER" id="PTHR10520">
    <property type="entry name" value="TRIFUNCTIONAL PURINE BIOSYNTHETIC PROTEIN ADENOSINE-3-RELATED"/>
    <property type="match status" value="1"/>
</dbReference>
<dbReference type="Pfam" id="PF00586">
    <property type="entry name" value="AIRS"/>
    <property type="match status" value="1"/>
</dbReference>
<dbReference type="Pfam" id="PF02769">
    <property type="entry name" value="AIRS_C"/>
    <property type="match status" value="1"/>
</dbReference>
<dbReference type="SUPFAM" id="SSF56042">
    <property type="entry name" value="PurM C-terminal domain-like"/>
    <property type="match status" value="1"/>
</dbReference>
<dbReference type="SUPFAM" id="SSF55326">
    <property type="entry name" value="PurM N-terminal domain-like"/>
    <property type="match status" value="1"/>
</dbReference>
<name>PUR5_METMP</name>
<accession>Q6LXU3</accession>
<gene>
    <name evidence="1" type="primary">purM</name>
    <name type="ordered locus">MMP1254</name>
</gene>
<keyword id="KW-0067">ATP-binding</keyword>
<keyword id="KW-0963">Cytoplasm</keyword>
<keyword id="KW-0436">Ligase</keyword>
<keyword id="KW-0547">Nucleotide-binding</keyword>
<keyword id="KW-0658">Purine biosynthesis</keyword>
<keyword id="KW-1185">Reference proteome</keyword>
<proteinExistence type="inferred from homology"/>
<evidence type="ECO:0000255" key="1">
    <source>
        <dbReference type="HAMAP-Rule" id="MF_00741"/>
    </source>
</evidence>